<comment type="subcellular location">
    <subcellularLocation>
        <location evidence="4">Secreted</location>
    </subcellularLocation>
</comment>
<dbReference type="EMBL" id="FJ645735">
    <property type="protein sequence ID" value="ACV32359.1"/>
    <property type="molecule type" value="mRNA"/>
</dbReference>
<dbReference type="EMBL" id="BC112469">
    <property type="protein sequence ID" value="AAI12470.1"/>
    <property type="molecule type" value="mRNA"/>
</dbReference>
<dbReference type="RefSeq" id="NP_001039545.1">
    <property type="nucleotide sequence ID" value="NM_001046080.2"/>
</dbReference>
<dbReference type="SMR" id="Q2KIX7"/>
<dbReference type="FunCoup" id="Q2KIX7">
    <property type="interactions" value="2"/>
</dbReference>
<dbReference type="STRING" id="9913.ENSBTAP00000040954"/>
<dbReference type="GlyGen" id="Q2KIX7">
    <property type="glycosylation" value="1 site"/>
</dbReference>
<dbReference type="PaxDb" id="9913-ENSBTAP00000040954"/>
<dbReference type="PeptideAtlas" id="Q2KIX7"/>
<dbReference type="Ensembl" id="ENSBTAT00000099266.1">
    <property type="protein sequence ID" value="ENSBTAP00000086928.1"/>
    <property type="gene ID" value="ENSBTAG00000030683.4"/>
</dbReference>
<dbReference type="GeneID" id="511240"/>
<dbReference type="KEGG" id="bta:511240"/>
<dbReference type="VEuPathDB" id="HostDB:ENSBTAG00000030683"/>
<dbReference type="eggNOG" id="ENOG502SK5K">
    <property type="taxonomic scope" value="Eukaryota"/>
</dbReference>
<dbReference type="GeneTree" id="ENSGT00900000141239"/>
<dbReference type="HOGENOM" id="CLU_001074_0_2_1"/>
<dbReference type="InParanoid" id="Q2KIX7"/>
<dbReference type="OMA" id="MNIAGFW"/>
<dbReference type="OrthoDB" id="8044756at2759"/>
<dbReference type="TreeFam" id="TF329591"/>
<dbReference type="Proteomes" id="UP000009136">
    <property type="component" value="Chromosome 5"/>
</dbReference>
<dbReference type="Bgee" id="ENSBTAG00000030683">
    <property type="expression patterns" value="Expressed in liver and 36 other cell types or tissues"/>
</dbReference>
<dbReference type="GO" id="GO:0005581">
    <property type="term" value="C:collagen trimer"/>
    <property type="evidence" value="ECO:0007669"/>
    <property type="project" value="UniProtKB-KW"/>
</dbReference>
<dbReference type="GO" id="GO:0005576">
    <property type="term" value="C:extracellular region"/>
    <property type="evidence" value="ECO:0007669"/>
    <property type="project" value="UniProtKB-SubCell"/>
</dbReference>
<dbReference type="Gene3D" id="2.60.120.40">
    <property type="match status" value="1"/>
</dbReference>
<dbReference type="InterPro" id="IPR001073">
    <property type="entry name" value="C1q_dom"/>
</dbReference>
<dbReference type="InterPro" id="IPR008160">
    <property type="entry name" value="Collagen"/>
</dbReference>
<dbReference type="InterPro" id="IPR050392">
    <property type="entry name" value="Collagen/C1q_domain"/>
</dbReference>
<dbReference type="InterPro" id="IPR008983">
    <property type="entry name" value="Tumour_necrosis_fac-like_dom"/>
</dbReference>
<dbReference type="PANTHER" id="PTHR15427">
    <property type="entry name" value="EMILIN ELASTIN MICROFIBRIL INTERFACE-LOCATED PROTEIN ELASTIN MICROFIBRIL INTERFACER"/>
    <property type="match status" value="1"/>
</dbReference>
<dbReference type="PANTHER" id="PTHR15427:SF35">
    <property type="entry name" value="PROTEIN HP-25 HOMOLOG 1"/>
    <property type="match status" value="1"/>
</dbReference>
<dbReference type="Pfam" id="PF00386">
    <property type="entry name" value="C1q"/>
    <property type="match status" value="1"/>
</dbReference>
<dbReference type="Pfam" id="PF01391">
    <property type="entry name" value="Collagen"/>
    <property type="match status" value="1"/>
</dbReference>
<dbReference type="PRINTS" id="PR00007">
    <property type="entry name" value="COMPLEMNTC1Q"/>
</dbReference>
<dbReference type="SMART" id="SM00110">
    <property type="entry name" value="C1Q"/>
    <property type="match status" value="1"/>
</dbReference>
<dbReference type="SUPFAM" id="SSF49842">
    <property type="entry name" value="TNF-like"/>
    <property type="match status" value="1"/>
</dbReference>
<dbReference type="PROSITE" id="PS50871">
    <property type="entry name" value="C1Q"/>
    <property type="match status" value="1"/>
</dbReference>
<sequence>MPGGRRRVGSMNIAGFWILAQFVLLLVANVKSSADSELCGPRGARGPPGLSGLPGPPGYTGPIGMPGLTGRPGLPGLVEKCPPLPQSAFSVKLSGPFPGPSQPIVFQEVLYNHQGHFDPATGVFNCSVPGVYHFGFDIELFQSAVKVGLMRNGIQIRDKRAEAGDSHEQASGSSVLELEKGDRVWLESKLDREESEKGTTHAVFYGFLLNGN</sequence>
<evidence type="ECO:0000255" key="1"/>
<evidence type="ECO:0000255" key="2">
    <source>
        <dbReference type="PROSITE-ProRule" id="PRU00368"/>
    </source>
</evidence>
<evidence type="ECO:0000256" key="3">
    <source>
        <dbReference type="SAM" id="MobiDB-lite"/>
    </source>
</evidence>
<evidence type="ECO:0000269" key="4">
    <source>
    </source>
</evidence>
<organism>
    <name type="scientific">Bos taurus</name>
    <name type="common">Bovine</name>
    <dbReference type="NCBI Taxonomy" id="9913"/>
    <lineage>
        <taxon>Eukaryota</taxon>
        <taxon>Metazoa</taxon>
        <taxon>Chordata</taxon>
        <taxon>Craniata</taxon>
        <taxon>Vertebrata</taxon>
        <taxon>Euteleostomi</taxon>
        <taxon>Mammalia</taxon>
        <taxon>Eutheria</taxon>
        <taxon>Laurasiatheria</taxon>
        <taxon>Artiodactyla</taxon>
        <taxon>Ruminantia</taxon>
        <taxon>Pecora</taxon>
        <taxon>Bovidae</taxon>
        <taxon>Bovinae</taxon>
        <taxon>Bos</taxon>
    </lineage>
</organism>
<reference key="1">
    <citation type="submission" date="2009-01" db="EMBL/GenBank/DDBJ databases">
        <title>Identification and characterization of three novel C1q/TNF family members that are orthologs of the siberian chipmunk hibernating proteins HP-20, HP-25, and HP-27.</title>
        <authorList>
            <person name="Wong G.W."/>
        </authorList>
    </citation>
    <scope>NUCLEOTIDE SEQUENCE [MRNA]</scope>
    <source>
        <tissue>Liver</tissue>
    </source>
</reference>
<reference key="2">
    <citation type="submission" date="2006-01" db="EMBL/GenBank/DDBJ databases">
        <authorList>
            <consortium name="NIH - Mammalian Gene Collection (MGC) project"/>
        </authorList>
    </citation>
    <scope>NUCLEOTIDE SEQUENCE [LARGE SCALE MRNA]</scope>
    <source>
        <strain>Hereford</strain>
        <tissue>Testis</tissue>
    </source>
</reference>
<reference key="3">
    <citation type="journal article" date="2002" name="Electrophoresis">
        <title>Strategies for proteomics with incompletely characterized genomes: the proteome of Bos taurus serum.</title>
        <authorList>
            <person name="Wait R."/>
            <person name="Miller I."/>
            <person name="Eberini I."/>
            <person name="Cairoli F."/>
            <person name="Veronesi C."/>
            <person name="Battocchio M."/>
            <person name="Gemeiner M."/>
            <person name="Gianazza E."/>
        </authorList>
    </citation>
    <scope>IDENTIFICATION BY MASS SPECTROMETRY</scope>
    <scope>SUBCELLULAR LOCATION</scope>
</reference>
<accession>Q2KIX7</accession>
<proteinExistence type="evidence at protein level"/>
<name>HP251_BOVIN</name>
<feature type="signal peptide" evidence="1">
    <location>
        <begin position="1"/>
        <end position="34"/>
    </location>
</feature>
<feature type="chain" id="PRO_0000399905" description="Protein HP-25 homolog 1">
    <location>
        <begin position="35"/>
        <end position="212"/>
    </location>
</feature>
<feature type="domain" description="Collagen-like">
    <location>
        <begin position="40"/>
        <end position="76"/>
    </location>
</feature>
<feature type="domain" description="C1q" evidence="2">
    <location>
        <begin position="82"/>
        <end position="212"/>
    </location>
</feature>
<feature type="region of interest" description="Disordered" evidence="3">
    <location>
        <begin position="36"/>
        <end position="66"/>
    </location>
</feature>
<feature type="compositionally biased region" description="Low complexity" evidence="3">
    <location>
        <begin position="40"/>
        <end position="53"/>
    </location>
</feature>
<feature type="glycosylation site" description="N-linked (GlcNAc...) asparagine" evidence="1">
    <location>
        <position position="125"/>
    </location>
</feature>
<protein>
    <recommendedName>
        <fullName>Protein HP-25 homolog 1</fullName>
    </recommendedName>
</protein>
<keyword id="KW-0176">Collagen</keyword>
<keyword id="KW-0325">Glycoprotein</keyword>
<keyword id="KW-1185">Reference proteome</keyword>
<keyword id="KW-0964">Secreted</keyword>
<keyword id="KW-0732">Signal</keyword>